<feature type="chain" id="PRO_0000286491" description="Single-stranded DNA-binding protein">
    <location>
        <begin position="1"/>
        <end position="150"/>
    </location>
</feature>
<feature type="domain" description="SSB" evidence="1">
    <location>
        <begin position="5"/>
        <end position="111"/>
    </location>
</feature>
<feature type="DNA-binding region" evidence="1">
    <location>
        <begin position="54"/>
        <end position="60"/>
    </location>
</feature>
<feature type="region of interest" description="Disordered" evidence="2">
    <location>
        <begin position="119"/>
        <end position="150"/>
    </location>
</feature>
<feature type="short sequence motif" description="Important for interaction with partner proteins" evidence="1">
    <location>
        <begin position="145"/>
        <end position="150"/>
    </location>
</feature>
<feature type="compositionally biased region" description="Basic and acidic residues" evidence="2">
    <location>
        <begin position="128"/>
        <end position="142"/>
    </location>
</feature>
<evidence type="ECO:0000255" key="1">
    <source>
        <dbReference type="HAMAP-Rule" id="MF_00984"/>
    </source>
</evidence>
<evidence type="ECO:0000256" key="2">
    <source>
        <dbReference type="SAM" id="MobiDB-lite"/>
    </source>
</evidence>
<organism>
    <name type="scientific">Rickettsia bellii (strain RML369-C)</name>
    <dbReference type="NCBI Taxonomy" id="336407"/>
    <lineage>
        <taxon>Bacteria</taxon>
        <taxon>Pseudomonadati</taxon>
        <taxon>Pseudomonadota</taxon>
        <taxon>Alphaproteobacteria</taxon>
        <taxon>Rickettsiales</taxon>
        <taxon>Rickettsiaceae</taxon>
        <taxon>Rickettsieae</taxon>
        <taxon>Rickettsia</taxon>
        <taxon>belli group</taxon>
    </lineage>
</organism>
<protein>
    <recommendedName>
        <fullName evidence="1">Single-stranded DNA-binding protein</fullName>
        <shortName evidence="1">SSB</shortName>
    </recommendedName>
</protein>
<dbReference type="EMBL" id="CP000087">
    <property type="protein sequence ID" value="ABE04242.1"/>
    <property type="molecule type" value="Genomic_DNA"/>
</dbReference>
<dbReference type="RefSeq" id="WP_011476856.1">
    <property type="nucleotide sequence ID" value="NC_007940.1"/>
</dbReference>
<dbReference type="SMR" id="Q1RK72"/>
<dbReference type="KEGG" id="rbe:RBE_0161"/>
<dbReference type="eggNOG" id="COG0629">
    <property type="taxonomic scope" value="Bacteria"/>
</dbReference>
<dbReference type="HOGENOM" id="CLU_078758_0_2_5"/>
<dbReference type="OrthoDB" id="9809878at2"/>
<dbReference type="Proteomes" id="UP000001951">
    <property type="component" value="Chromosome"/>
</dbReference>
<dbReference type="GO" id="GO:0009295">
    <property type="term" value="C:nucleoid"/>
    <property type="evidence" value="ECO:0007669"/>
    <property type="project" value="TreeGrafter"/>
</dbReference>
<dbReference type="GO" id="GO:0003697">
    <property type="term" value="F:single-stranded DNA binding"/>
    <property type="evidence" value="ECO:0007669"/>
    <property type="project" value="UniProtKB-UniRule"/>
</dbReference>
<dbReference type="GO" id="GO:0006310">
    <property type="term" value="P:DNA recombination"/>
    <property type="evidence" value="ECO:0007669"/>
    <property type="project" value="UniProtKB-UniRule"/>
</dbReference>
<dbReference type="GO" id="GO:0006281">
    <property type="term" value="P:DNA repair"/>
    <property type="evidence" value="ECO:0007669"/>
    <property type="project" value="UniProtKB-UniRule"/>
</dbReference>
<dbReference type="GO" id="GO:0006260">
    <property type="term" value="P:DNA replication"/>
    <property type="evidence" value="ECO:0007669"/>
    <property type="project" value="UniProtKB-UniRule"/>
</dbReference>
<dbReference type="CDD" id="cd04496">
    <property type="entry name" value="SSB_OBF"/>
    <property type="match status" value="1"/>
</dbReference>
<dbReference type="Gene3D" id="2.40.50.140">
    <property type="entry name" value="Nucleic acid-binding proteins"/>
    <property type="match status" value="1"/>
</dbReference>
<dbReference type="HAMAP" id="MF_00984">
    <property type="entry name" value="SSB"/>
    <property type="match status" value="1"/>
</dbReference>
<dbReference type="InterPro" id="IPR012340">
    <property type="entry name" value="NA-bd_OB-fold"/>
</dbReference>
<dbReference type="InterPro" id="IPR000424">
    <property type="entry name" value="Primosome_PriB/ssb"/>
</dbReference>
<dbReference type="InterPro" id="IPR011344">
    <property type="entry name" value="ssDNA-bd"/>
</dbReference>
<dbReference type="NCBIfam" id="NF005170">
    <property type="entry name" value="PRK06642.1"/>
    <property type="match status" value="1"/>
</dbReference>
<dbReference type="NCBIfam" id="TIGR00621">
    <property type="entry name" value="ssb"/>
    <property type="match status" value="1"/>
</dbReference>
<dbReference type="PANTHER" id="PTHR10302">
    <property type="entry name" value="SINGLE-STRANDED DNA-BINDING PROTEIN"/>
    <property type="match status" value="1"/>
</dbReference>
<dbReference type="PANTHER" id="PTHR10302:SF27">
    <property type="entry name" value="SINGLE-STRANDED DNA-BINDING PROTEIN"/>
    <property type="match status" value="1"/>
</dbReference>
<dbReference type="Pfam" id="PF00436">
    <property type="entry name" value="SSB"/>
    <property type="match status" value="1"/>
</dbReference>
<dbReference type="PIRSF" id="PIRSF002070">
    <property type="entry name" value="SSB"/>
    <property type="match status" value="1"/>
</dbReference>
<dbReference type="SUPFAM" id="SSF50249">
    <property type="entry name" value="Nucleic acid-binding proteins"/>
    <property type="match status" value="1"/>
</dbReference>
<dbReference type="PROSITE" id="PS50935">
    <property type="entry name" value="SSB"/>
    <property type="match status" value="1"/>
</dbReference>
<comment type="function">
    <text evidence="1">Plays an important role in DNA replication, recombination and repair. Binds to ssDNA and to an array of partner proteins to recruit them to their sites of action during DNA metabolism.</text>
</comment>
<comment type="subunit">
    <text evidence="1">Homotetramer.</text>
</comment>
<reference key="1">
    <citation type="journal article" date="2006" name="PLoS Genet.">
        <title>Genome sequence of Rickettsia bellii illuminates the role of amoebae in gene exchanges between intracellular pathogens.</title>
        <authorList>
            <person name="Ogata H."/>
            <person name="La Scola B."/>
            <person name="Audic S."/>
            <person name="Renesto P."/>
            <person name="Blanc G."/>
            <person name="Robert C."/>
            <person name="Fournier P.-E."/>
            <person name="Claverie J.-M."/>
            <person name="Raoult D."/>
        </authorList>
    </citation>
    <scope>NUCLEOTIDE SEQUENCE [LARGE SCALE GENOMIC DNA]</scope>
    <source>
        <strain>RML369-C</strain>
    </source>
</reference>
<proteinExistence type="inferred from homology"/>
<sequence>MAGSLNKVTLIGNLGRDPEIRTTGEGKEIANLSLATTDIWKDRVTGEKKEKTEWHRVVIFNEGLVSVVKNYVKKGSKLYIEGSLQTRKWNDSSGVEKYTTEIVLQNFNSQLILLDSKNSTSSSLQDSGHSEYKHSKPSFDHSDLDDEIPF</sequence>
<keyword id="KW-0227">DNA damage</keyword>
<keyword id="KW-0233">DNA recombination</keyword>
<keyword id="KW-0234">DNA repair</keyword>
<keyword id="KW-0235">DNA replication</keyword>
<keyword id="KW-0238">DNA-binding</keyword>
<accession>Q1RK72</accession>
<gene>
    <name type="primary">ssb</name>
    <name type="ordered locus">RBE_0161</name>
</gene>
<name>SSB_RICBR</name>